<proteinExistence type="inferred from homology"/>
<keyword id="KW-0066">ATP synthesis</keyword>
<keyword id="KW-0067">ATP-binding</keyword>
<keyword id="KW-0139">CF(1)</keyword>
<keyword id="KW-0150">Chloroplast</keyword>
<keyword id="KW-0375">Hydrogen ion transport</keyword>
<keyword id="KW-0406">Ion transport</keyword>
<keyword id="KW-0472">Membrane</keyword>
<keyword id="KW-0547">Nucleotide-binding</keyword>
<keyword id="KW-0597">Phosphoprotein</keyword>
<keyword id="KW-0934">Plastid</keyword>
<keyword id="KW-0793">Thylakoid</keyword>
<keyword id="KW-1278">Translocase</keyword>
<keyword id="KW-0813">Transport</keyword>
<organism>
    <name type="scientific">Draba nemorosa</name>
    <name type="common">Woodland whitlowgrass</name>
    <dbReference type="NCBI Taxonomy" id="171822"/>
    <lineage>
        <taxon>Eukaryota</taxon>
        <taxon>Viridiplantae</taxon>
        <taxon>Streptophyta</taxon>
        <taxon>Embryophyta</taxon>
        <taxon>Tracheophyta</taxon>
        <taxon>Spermatophyta</taxon>
        <taxon>Magnoliopsida</taxon>
        <taxon>eudicotyledons</taxon>
        <taxon>Gunneridae</taxon>
        <taxon>Pentapetalae</taxon>
        <taxon>rosids</taxon>
        <taxon>malvids</taxon>
        <taxon>Brassicales</taxon>
        <taxon>Brassicaceae</taxon>
        <taxon>Arabideae</taxon>
        <taxon>Draba</taxon>
    </lineage>
</organism>
<dbReference type="EC" id="7.1.2.2" evidence="2"/>
<dbReference type="EMBL" id="AP009373">
    <property type="protein sequence ID" value="BAF50381.1"/>
    <property type="molecule type" value="Genomic_DNA"/>
</dbReference>
<dbReference type="RefSeq" id="YP_001123557.1">
    <property type="nucleotide sequence ID" value="NC_009272.1"/>
</dbReference>
<dbReference type="SMR" id="A4QL26"/>
<dbReference type="GeneID" id="4964764"/>
<dbReference type="GO" id="GO:0009535">
    <property type="term" value="C:chloroplast thylakoid membrane"/>
    <property type="evidence" value="ECO:0007669"/>
    <property type="project" value="UniProtKB-SubCell"/>
</dbReference>
<dbReference type="GO" id="GO:0005739">
    <property type="term" value="C:mitochondrion"/>
    <property type="evidence" value="ECO:0007669"/>
    <property type="project" value="GOC"/>
</dbReference>
<dbReference type="GO" id="GO:0045259">
    <property type="term" value="C:proton-transporting ATP synthase complex"/>
    <property type="evidence" value="ECO:0007669"/>
    <property type="project" value="UniProtKB-KW"/>
</dbReference>
<dbReference type="GO" id="GO:0005524">
    <property type="term" value="F:ATP binding"/>
    <property type="evidence" value="ECO:0007669"/>
    <property type="project" value="UniProtKB-UniRule"/>
</dbReference>
<dbReference type="GO" id="GO:0016887">
    <property type="term" value="F:ATP hydrolysis activity"/>
    <property type="evidence" value="ECO:0007669"/>
    <property type="project" value="InterPro"/>
</dbReference>
<dbReference type="GO" id="GO:0046933">
    <property type="term" value="F:proton-transporting ATP synthase activity, rotational mechanism"/>
    <property type="evidence" value="ECO:0007669"/>
    <property type="project" value="UniProtKB-UniRule"/>
</dbReference>
<dbReference type="GO" id="GO:0042776">
    <property type="term" value="P:proton motive force-driven mitochondrial ATP synthesis"/>
    <property type="evidence" value="ECO:0007669"/>
    <property type="project" value="TreeGrafter"/>
</dbReference>
<dbReference type="CDD" id="cd18110">
    <property type="entry name" value="ATP-synt_F1_beta_C"/>
    <property type="match status" value="1"/>
</dbReference>
<dbReference type="CDD" id="cd18115">
    <property type="entry name" value="ATP-synt_F1_beta_N"/>
    <property type="match status" value="1"/>
</dbReference>
<dbReference type="CDD" id="cd01133">
    <property type="entry name" value="F1-ATPase_beta_CD"/>
    <property type="match status" value="1"/>
</dbReference>
<dbReference type="FunFam" id="1.10.1140.10:FF:000001">
    <property type="entry name" value="ATP synthase subunit beta"/>
    <property type="match status" value="1"/>
</dbReference>
<dbReference type="FunFam" id="3.40.50.12240:FF:000006">
    <property type="entry name" value="ATP synthase subunit beta"/>
    <property type="match status" value="1"/>
</dbReference>
<dbReference type="FunFam" id="3.40.50.300:FF:000026">
    <property type="entry name" value="ATP synthase subunit beta"/>
    <property type="match status" value="1"/>
</dbReference>
<dbReference type="FunFam" id="2.40.10.170:FF:000002">
    <property type="entry name" value="ATP synthase subunit beta, chloroplastic"/>
    <property type="match status" value="1"/>
</dbReference>
<dbReference type="Gene3D" id="2.40.10.170">
    <property type="match status" value="1"/>
</dbReference>
<dbReference type="Gene3D" id="1.10.1140.10">
    <property type="entry name" value="Bovine Mitochondrial F1-atpase, Atp Synthase Beta Chain, Chain D, domain 3"/>
    <property type="match status" value="1"/>
</dbReference>
<dbReference type="Gene3D" id="3.40.50.300">
    <property type="entry name" value="P-loop containing nucleotide triphosphate hydrolases"/>
    <property type="match status" value="1"/>
</dbReference>
<dbReference type="HAMAP" id="MF_01347">
    <property type="entry name" value="ATP_synth_beta_bact"/>
    <property type="match status" value="1"/>
</dbReference>
<dbReference type="InterPro" id="IPR003593">
    <property type="entry name" value="AAA+_ATPase"/>
</dbReference>
<dbReference type="InterPro" id="IPR055190">
    <property type="entry name" value="ATP-synt_VA_C"/>
</dbReference>
<dbReference type="InterPro" id="IPR005722">
    <property type="entry name" value="ATP_synth_F1_bsu"/>
</dbReference>
<dbReference type="InterPro" id="IPR020003">
    <property type="entry name" value="ATPase_a/bsu_AS"/>
</dbReference>
<dbReference type="InterPro" id="IPR050053">
    <property type="entry name" value="ATPase_alpha/beta_chains"/>
</dbReference>
<dbReference type="InterPro" id="IPR004100">
    <property type="entry name" value="ATPase_F1/V1/A1_a/bsu_N"/>
</dbReference>
<dbReference type="InterPro" id="IPR036121">
    <property type="entry name" value="ATPase_F1/V1/A1_a/bsu_N_sf"/>
</dbReference>
<dbReference type="InterPro" id="IPR000194">
    <property type="entry name" value="ATPase_F1/V1/A1_a/bsu_nucl-bd"/>
</dbReference>
<dbReference type="InterPro" id="IPR024034">
    <property type="entry name" value="ATPase_F1/V1_b/a_C"/>
</dbReference>
<dbReference type="InterPro" id="IPR027417">
    <property type="entry name" value="P-loop_NTPase"/>
</dbReference>
<dbReference type="NCBIfam" id="TIGR01039">
    <property type="entry name" value="atpD"/>
    <property type="match status" value="1"/>
</dbReference>
<dbReference type="PANTHER" id="PTHR15184">
    <property type="entry name" value="ATP SYNTHASE"/>
    <property type="match status" value="1"/>
</dbReference>
<dbReference type="PANTHER" id="PTHR15184:SF71">
    <property type="entry name" value="ATP SYNTHASE SUBUNIT BETA, MITOCHONDRIAL"/>
    <property type="match status" value="1"/>
</dbReference>
<dbReference type="Pfam" id="PF00006">
    <property type="entry name" value="ATP-synt_ab"/>
    <property type="match status" value="1"/>
</dbReference>
<dbReference type="Pfam" id="PF02874">
    <property type="entry name" value="ATP-synt_ab_N"/>
    <property type="match status" value="1"/>
</dbReference>
<dbReference type="Pfam" id="PF22919">
    <property type="entry name" value="ATP-synt_VA_C"/>
    <property type="match status" value="1"/>
</dbReference>
<dbReference type="SMART" id="SM00382">
    <property type="entry name" value="AAA"/>
    <property type="match status" value="1"/>
</dbReference>
<dbReference type="SUPFAM" id="SSF47917">
    <property type="entry name" value="C-terminal domain of alpha and beta subunits of F1 ATP synthase"/>
    <property type="match status" value="1"/>
</dbReference>
<dbReference type="SUPFAM" id="SSF50615">
    <property type="entry name" value="N-terminal domain of alpha and beta subunits of F1 ATP synthase"/>
    <property type="match status" value="1"/>
</dbReference>
<dbReference type="SUPFAM" id="SSF52540">
    <property type="entry name" value="P-loop containing nucleoside triphosphate hydrolases"/>
    <property type="match status" value="1"/>
</dbReference>
<dbReference type="PROSITE" id="PS00152">
    <property type="entry name" value="ATPASE_ALPHA_BETA"/>
    <property type="match status" value="1"/>
</dbReference>
<reference key="1">
    <citation type="submission" date="2007-03" db="EMBL/GenBank/DDBJ databases">
        <title>Sequencing analysis of Draba nemoroza chloroplast DNA.</title>
        <authorList>
            <person name="Hosouchi T."/>
            <person name="Tsuruoka H."/>
            <person name="Kotani H."/>
        </authorList>
    </citation>
    <scope>NUCLEOTIDE SEQUENCE [LARGE SCALE GENOMIC DNA]</scope>
</reference>
<protein>
    <recommendedName>
        <fullName evidence="2">ATP synthase subunit beta, chloroplastic</fullName>
        <ecNumber evidence="2">7.1.2.2</ecNumber>
    </recommendedName>
    <alternativeName>
        <fullName evidence="2">ATP synthase F1 sector subunit beta</fullName>
    </alternativeName>
    <alternativeName>
        <fullName evidence="2">F-ATPase subunit beta</fullName>
    </alternativeName>
</protein>
<geneLocation type="chloroplast"/>
<sequence>MRINPTTSDPEVSIREKKNLGRIAQIIGPVLDVAFPPGKMPNIYNALVVKGRDTLGQEINVTCEVQQLLGNNRVRAVAMSATEGLKRGMDVVDMGSPLSVPVGGATLGRIFNVLGEPVDNLGPVDTRTTSPIHKSAPAFIELDTKLSIFETGIKVVDLLAPYRRGGKIGLFGGAGVGKTVLIMELINNIAKAHGGVSVFGGVGERTREGNDLYMEMKESGVINEQNLAESKVALVYGQMNEPPGARMRVGLTALTMAEYFRDVNEQDVLLFIDNIFRFVQAGSEVSALLGRMPSAVGYQPTLSTEMGSLQERITSTKKGSITSIQAVYVPADDLTDPAPATTFAHLDATTVLSRGLAAKGIYPAVDPLDSTSTMLQPRIVGEEHYETAQQVKQTLQRYKELQDIIAILGLDELSEEDRLTVARARKIERFLSQPFFVAEVFTGSPGKYVGLAETIRGFKLILSGEFDSLPEQAFYLVGNIDEATAKATNLEMESKLKK</sequence>
<feature type="chain" id="PRO_0000339619" description="ATP synthase subunit beta, chloroplastic">
    <location>
        <begin position="1"/>
        <end position="498"/>
    </location>
</feature>
<feature type="binding site" evidence="2">
    <location>
        <begin position="172"/>
        <end position="179"/>
    </location>
    <ligand>
        <name>ATP</name>
        <dbReference type="ChEBI" id="CHEBI:30616"/>
    </ligand>
</feature>
<feature type="modified residue" description="Phosphothreonine" evidence="1">
    <location>
        <position position="6"/>
    </location>
</feature>
<feature type="modified residue" description="Phosphoserine" evidence="1">
    <location>
        <position position="13"/>
    </location>
</feature>
<gene>
    <name evidence="2" type="primary">atpB</name>
</gene>
<accession>A4QL26</accession>
<name>ATPB_DRANE</name>
<evidence type="ECO:0000250" key="1">
    <source>
        <dbReference type="UniProtKB" id="P19366"/>
    </source>
</evidence>
<evidence type="ECO:0000255" key="2">
    <source>
        <dbReference type="HAMAP-Rule" id="MF_01347"/>
    </source>
</evidence>
<comment type="function">
    <text evidence="2">Produces ATP from ADP in the presence of a proton gradient across the membrane. The catalytic sites are hosted primarily by the beta subunits.</text>
</comment>
<comment type="catalytic activity">
    <reaction evidence="2">
        <text>ATP + H2O + 4 H(+)(in) = ADP + phosphate + 5 H(+)(out)</text>
        <dbReference type="Rhea" id="RHEA:57720"/>
        <dbReference type="ChEBI" id="CHEBI:15377"/>
        <dbReference type="ChEBI" id="CHEBI:15378"/>
        <dbReference type="ChEBI" id="CHEBI:30616"/>
        <dbReference type="ChEBI" id="CHEBI:43474"/>
        <dbReference type="ChEBI" id="CHEBI:456216"/>
        <dbReference type="EC" id="7.1.2.2"/>
    </reaction>
</comment>
<comment type="subunit">
    <text evidence="2">F-type ATPases have 2 components, CF(1) - the catalytic core - and CF(0) - the membrane proton channel. CF(1) has five subunits: alpha(3), beta(3), gamma(1), delta(1), epsilon(1). CF(0) has four main subunits: a(1), b(1), b'(1) and c(9-12).</text>
</comment>
<comment type="subcellular location">
    <subcellularLocation>
        <location evidence="2">Plastid</location>
        <location evidence="2">Chloroplast thylakoid membrane</location>
        <topology evidence="2">Peripheral membrane protein</topology>
    </subcellularLocation>
</comment>
<comment type="similarity">
    <text evidence="2">Belongs to the ATPase alpha/beta chains family.</text>
</comment>